<gene>
    <name evidence="1" type="primary">astE</name>
    <name type="ordered locus">Shewmr7_1946</name>
</gene>
<accession>Q0HVC0</accession>
<feature type="chain" id="PRO_0000262083" description="Succinylglutamate desuccinylase">
    <location>
        <begin position="1"/>
        <end position="344"/>
    </location>
</feature>
<feature type="active site" evidence="1">
    <location>
        <position position="224"/>
    </location>
</feature>
<feature type="binding site" evidence="1">
    <location>
        <position position="63"/>
    </location>
    <ligand>
        <name>Zn(2+)</name>
        <dbReference type="ChEBI" id="CHEBI:29105"/>
    </ligand>
</feature>
<feature type="binding site" evidence="1">
    <location>
        <position position="66"/>
    </location>
    <ligand>
        <name>Zn(2+)</name>
        <dbReference type="ChEBI" id="CHEBI:29105"/>
    </ligand>
</feature>
<feature type="binding site" evidence="1">
    <location>
        <position position="160"/>
    </location>
    <ligand>
        <name>Zn(2+)</name>
        <dbReference type="ChEBI" id="CHEBI:29105"/>
    </ligand>
</feature>
<organism>
    <name type="scientific">Shewanella sp. (strain MR-7)</name>
    <dbReference type="NCBI Taxonomy" id="60481"/>
    <lineage>
        <taxon>Bacteria</taxon>
        <taxon>Pseudomonadati</taxon>
        <taxon>Pseudomonadota</taxon>
        <taxon>Gammaproteobacteria</taxon>
        <taxon>Alteromonadales</taxon>
        <taxon>Shewanellaceae</taxon>
        <taxon>Shewanella</taxon>
    </lineage>
</organism>
<comment type="function">
    <text evidence="1">Transforms N(2)-succinylglutamate into succinate and glutamate.</text>
</comment>
<comment type="catalytic activity">
    <reaction evidence="1">
        <text>N-succinyl-L-glutamate + H2O = L-glutamate + succinate</text>
        <dbReference type="Rhea" id="RHEA:15169"/>
        <dbReference type="ChEBI" id="CHEBI:15377"/>
        <dbReference type="ChEBI" id="CHEBI:29985"/>
        <dbReference type="ChEBI" id="CHEBI:30031"/>
        <dbReference type="ChEBI" id="CHEBI:58763"/>
        <dbReference type="EC" id="3.5.1.96"/>
    </reaction>
</comment>
<comment type="cofactor">
    <cofactor evidence="1">
        <name>Zn(2+)</name>
        <dbReference type="ChEBI" id="CHEBI:29105"/>
    </cofactor>
    <text evidence="1">Binds 1 zinc ion per subunit.</text>
</comment>
<comment type="pathway">
    <text evidence="1">Amino-acid degradation; L-arginine degradation via AST pathway; L-glutamate and succinate from L-arginine: step 5/5.</text>
</comment>
<comment type="similarity">
    <text evidence="1">Belongs to the AspA/AstE family. Succinylglutamate desuccinylase subfamily.</text>
</comment>
<proteinExistence type="inferred from homology"/>
<reference key="1">
    <citation type="submission" date="2006-08" db="EMBL/GenBank/DDBJ databases">
        <title>Complete sequence of chromosome 1 of Shewanella sp. MR-7.</title>
        <authorList>
            <person name="Copeland A."/>
            <person name="Lucas S."/>
            <person name="Lapidus A."/>
            <person name="Barry K."/>
            <person name="Detter J.C."/>
            <person name="Glavina del Rio T."/>
            <person name="Hammon N."/>
            <person name="Israni S."/>
            <person name="Dalin E."/>
            <person name="Tice H."/>
            <person name="Pitluck S."/>
            <person name="Kiss H."/>
            <person name="Brettin T."/>
            <person name="Bruce D."/>
            <person name="Han C."/>
            <person name="Tapia R."/>
            <person name="Gilna P."/>
            <person name="Schmutz J."/>
            <person name="Larimer F."/>
            <person name="Land M."/>
            <person name="Hauser L."/>
            <person name="Kyrpides N."/>
            <person name="Mikhailova N."/>
            <person name="Nealson K."/>
            <person name="Konstantinidis K."/>
            <person name="Klappenbach J."/>
            <person name="Tiedje J."/>
            <person name="Richardson P."/>
        </authorList>
    </citation>
    <scope>NUCLEOTIDE SEQUENCE [LARGE SCALE GENOMIC DNA]</scope>
    <source>
        <strain>MR-7</strain>
    </source>
</reference>
<evidence type="ECO:0000255" key="1">
    <source>
        <dbReference type="HAMAP-Rule" id="MF_00767"/>
    </source>
</evidence>
<dbReference type="EC" id="3.5.1.96" evidence="1"/>
<dbReference type="EMBL" id="CP000444">
    <property type="protein sequence ID" value="ABI42935.1"/>
    <property type="molecule type" value="Genomic_DNA"/>
</dbReference>
<dbReference type="SMR" id="Q0HVC0"/>
<dbReference type="KEGG" id="shm:Shewmr7_1946"/>
<dbReference type="HOGENOM" id="CLU_071608_0_0_6"/>
<dbReference type="UniPathway" id="UPA00185">
    <property type="reaction ID" value="UER00283"/>
</dbReference>
<dbReference type="GO" id="GO:0016788">
    <property type="term" value="F:hydrolase activity, acting on ester bonds"/>
    <property type="evidence" value="ECO:0007669"/>
    <property type="project" value="UniProtKB-UniRule"/>
</dbReference>
<dbReference type="GO" id="GO:0009017">
    <property type="term" value="F:succinylglutamate desuccinylase activity"/>
    <property type="evidence" value="ECO:0007669"/>
    <property type="project" value="UniProtKB-EC"/>
</dbReference>
<dbReference type="GO" id="GO:0008270">
    <property type="term" value="F:zinc ion binding"/>
    <property type="evidence" value="ECO:0007669"/>
    <property type="project" value="UniProtKB-UniRule"/>
</dbReference>
<dbReference type="GO" id="GO:0019544">
    <property type="term" value="P:arginine catabolic process to glutamate"/>
    <property type="evidence" value="ECO:0007669"/>
    <property type="project" value="UniProtKB-UniRule"/>
</dbReference>
<dbReference type="GO" id="GO:0019545">
    <property type="term" value="P:arginine catabolic process to succinate"/>
    <property type="evidence" value="ECO:0007669"/>
    <property type="project" value="UniProtKB-UniRule"/>
</dbReference>
<dbReference type="CDD" id="cd03855">
    <property type="entry name" value="M14_ASTE"/>
    <property type="match status" value="1"/>
</dbReference>
<dbReference type="FunFam" id="3.40.630.10:FF:000172">
    <property type="entry name" value="Succinylglutamate desuccinylase"/>
    <property type="match status" value="1"/>
</dbReference>
<dbReference type="Gene3D" id="3.40.630.10">
    <property type="entry name" value="Zn peptidases"/>
    <property type="match status" value="1"/>
</dbReference>
<dbReference type="HAMAP" id="MF_00767">
    <property type="entry name" value="Arg_catab_AstE"/>
    <property type="match status" value="1"/>
</dbReference>
<dbReference type="InterPro" id="IPR050178">
    <property type="entry name" value="AspA/AstE_fam"/>
</dbReference>
<dbReference type="InterPro" id="IPR055438">
    <property type="entry name" value="AstE_AspA_cat"/>
</dbReference>
<dbReference type="InterPro" id="IPR007036">
    <property type="entry name" value="Aste_AspA_hybrid_dom"/>
</dbReference>
<dbReference type="InterPro" id="IPR016681">
    <property type="entry name" value="SuccinylGlu_desuccinylase"/>
</dbReference>
<dbReference type="NCBIfam" id="TIGR03242">
    <property type="entry name" value="arg_catab_astE"/>
    <property type="match status" value="1"/>
</dbReference>
<dbReference type="NCBIfam" id="NF003706">
    <property type="entry name" value="PRK05324.1"/>
    <property type="match status" value="1"/>
</dbReference>
<dbReference type="PANTHER" id="PTHR15162">
    <property type="entry name" value="ASPARTOACYLASE"/>
    <property type="match status" value="1"/>
</dbReference>
<dbReference type="PANTHER" id="PTHR15162:SF7">
    <property type="entry name" value="SUCCINYLGLUTAMATE DESUCCINYLASE"/>
    <property type="match status" value="1"/>
</dbReference>
<dbReference type="Pfam" id="PF24827">
    <property type="entry name" value="AstE_AspA_cat"/>
    <property type="match status" value="1"/>
</dbReference>
<dbReference type="Pfam" id="PF04952">
    <property type="entry name" value="AstE_AspA_hybrid"/>
    <property type="match status" value="1"/>
</dbReference>
<dbReference type="PIRSF" id="PIRSF017020">
    <property type="entry name" value="AstE"/>
    <property type="match status" value="1"/>
</dbReference>
<dbReference type="SUPFAM" id="SSF53187">
    <property type="entry name" value="Zn-dependent exopeptidases"/>
    <property type="match status" value="1"/>
</dbReference>
<name>ASTE_SHESR</name>
<sequence>MLQALLDSKDFLALTLANPETLGDEFSFALGEHTRVEVWDTGVIVFEPAQAQGKDVILSCGVHGNETAPIELCNTLIKQLLQQKIIAKQRTLFLIGNPLAINNGTRIIDENMNRLFSGEHSNPPGLVNPERVRAKKLEAYVDRFFKGAAAGRQRIHYDLHTAMRASKHEKFAIYPYRPGRAYSAEQIMFLAASGVDTVLFHHEPTTTFSYFSSEQYGADAFTIELGKVYPMGQNDMTRFIAAQEMFMRLITDKPLALEPFSADKVNLYQVCRVINKHFDDFEFTFATDVENFRSFPKGFVLAREGGQEIKVEQEFEAIVFPNAKVPIGNRTVICLIPSVAPDVR</sequence>
<keyword id="KW-0056">Arginine metabolism</keyword>
<keyword id="KW-0378">Hydrolase</keyword>
<keyword id="KW-0479">Metal-binding</keyword>
<keyword id="KW-0862">Zinc</keyword>
<protein>
    <recommendedName>
        <fullName evidence="1">Succinylglutamate desuccinylase</fullName>
        <ecNumber evidence="1">3.5.1.96</ecNumber>
    </recommendedName>
</protein>